<keyword id="KW-1185">Reference proteome</keyword>
<keyword id="KW-0694">RNA-binding</keyword>
<name>YQOC_CAEEL</name>
<organism>
    <name type="scientific">Caenorhabditis elegans</name>
    <dbReference type="NCBI Taxonomy" id="6239"/>
    <lineage>
        <taxon>Eukaryota</taxon>
        <taxon>Metazoa</taxon>
        <taxon>Ecdysozoa</taxon>
        <taxon>Nematoda</taxon>
        <taxon>Chromadorea</taxon>
        <taxon>Rhabditida</taxon>
        <taxon>Rhabditina</taxon>
        <taxon>Rhabditomorpha</taxon>
        <taxon>Rhabditoidea</taxon>
        <taxon>Rhabditidae</taxon>
        <taxon>Peloderinae</taxon>
        <taxon>Caenorhabditis</taxon>
    </lineage>
</organism>
<evidence type="ECO:0000255" key="1">
    <source>
        <dbReference type="PROSITE-ProRule" id="PRU00176"/>
    </source>
</evidence>
<evidence type="ECO:0000256" key="2">
    <source>
        <dbReference type="SAM" id="MobiDB-lite"/>
    </source>
</evidence>
<sequence length="197" mass="21649">MAPTTVIADNNCNEESSNSFEMEIEAESAILEQIQNKMAKNLESAAYVPPTEEEQKAIDAKSVFIGNVDFNSTIEEVEEHFKGCGHIVRTTIPKDKFTKKQKNFAYIEFDDSSSIENALVMNGSLFRSRPIVVTAKRTNIPGMGHGVRGSSRGTFGRGRGAARGAPGRQQTVVVKYVYVNGPNRGGRGGRGRRFNPY</sequence>
<reference key="1">
    <citation type="journal article" date="1998" name="Science">
        <title>Genome sequence of the nematode C. elegans: a platform for investigating biology.</title>
        <authorList>
            <consortium name="The C. elegans sequencing consortium"/>
        </authorList>
    </citation>
    <scope>NUCLEOTIDE SEQUENCE [LARGE SCALE GENOMIC DNA]</scope>
    <source>
        <strain>Bristol N2</strain>
    </source>
</reference>
<dbReference type="EMBL" id="FO081042">
    <property type="protein sequence ID" value="CCD68740.1"/>
    <property type="molecule type" value="Genomic_DNA"/>
</dbReference>
<dbReference type="PIR" id="T15923">
    <property type="entry name" value="T15923"/>
</dbReference>
<dbReference type="RefSeq" id="NP_495021.1">
    <property type="nucleotide sequence ID" value="NM_062620.6"/>
</dbReference>
<dbReference type="SMR" id="Q09301"/>
<dbReference type="BioGRID" id="39266">
    <property type="interactions" value="1"/>
</dbReference>
<dbReference type="FunCoup" id="Q09301">
    <property type="interactions" value="216"/>
</dbReference>
<dbReference type="IntAct" id="Q09301">
    <property type="interactions" value="1"/>
</dbReference>
<dbReference type="STRING" id="6239.EEED8.12.1"/>
<dbReference type="PaxDb" id="6239-EEED8.12"/>
<dbReference type="EnsemblMetazoa" id="EEED8.12.1">
    <property type="protein sequence ID" value="EEED8.12.1"/>
    <property type="gene ID" value="WBGene00017140"/>
</dbReference>
<dbReference type="GeneID" id="173922"/>
<dbReference type="KEGG" id="cel:CELE_EEED8.12"/>
<dbReference type="UCSC" id="EEED8.12">
    <property type="organism name" value="c. elegans"/>
</dbReference>
<dbReference type="AGR" id="WB:WBGene00017140"/>
<dbReference type="CTD" id="173922"/>
<dbReference type="WormBase" id="EEED8.12">
    <property type="protein sequence ID" value="CE01885"/>
    <property type="gene ID" value="WBGene00017140"/>
</dbReference>
<dbReference type="eggNOG" id="KOG4209">
    <property type="taxonomic scope" value="Eukaryota"/>
</dbReference>
<dbReference type="GeneTree" id="ENSGT00970000196177"/>
<dbReference type="HOGENOM" id="CLU_012062_23_3_1"/>
<dbReference type="InParanoid" id="Q09301"/>
<dbReference type="OMA" id="MALIMHE"/>
<dbReference type="OrthoDB" id="4726at2759"/>
<dbReference type="PhylomeDB" id="Q09301"/>
<dbReference type="PRO" id="PR:Q09301"/>
<dbReference type="Proteomes" id="UP000001940">
    <property type="component" value="Chromosome II"/>
</dbReference>
<dbReference type="Bgee" id="WBGene00017140">
    <property type="expression patterns" value="Expressed in embryo and 3 other cell types or tissues"/>
</dbReference>
<dbReference type="GO" id="GO:0005634">
    <property type="term" value="C:nucleus"/>
    <property type="evidence" value="ECO:0000318"/>
    <property type="project" value="GO_Central"/>
</dbReference>
<dbReference type="GO" id="GO:0008143">
    <property type="term" value="F:poly(A) binding"/>
    <property type="evidence" value="ECO:0000318"/>
    <property type="project" value="GO_Central"/>
</dbReference>
<dbReference type="CDD" id="cd12306">
    <property type="entry name" value="RRM_II_PABPs"/>
    <property type="match status" value="1"/>
</dbReference>
<dbReference type="Gene3D" id="3.30.70.330">
    <property type="match status" value="1"/>
</dbReference>
<dbReference type="InterPro" id="IPR012677">
    <property type="entry name" value="Nucleotide-bd_a/b_plait_sf"/>
</dbReference>
<dbReference type="InterPro" id="IPR035979">
    <property type="entry name" value="RBD_domain_sf"/>
</dbReference>
<dbReference type="InterPro" id="IPR000504">
    <property type="entry name" value="RRM_dom"/>
</dbReference>
<dbReference type="PANTHER" id="PTHR23236">
    <property type="entry name" value="EUKARYOTIC TRANSLATION INITIATION FACTOR 4B/4H"/>
    <property type="match status" value="1"/>
</dbReference>
<dbReference type="PANTHER" id="PTHR23236:SF23">
    <property type="entry name" value="RNA-BINDING PROTEIN EEED8.12-RELATED"/>
    <property type="match status" value="1"/>
</dbReference>
<dbReference type="Pfam" id="PF00076">
    <property type="entry name" value="RRM_1"/>
    <property type="match status" value="1"/>
</dbReference>
<dbReference type="SMART" id="SM00360">
    <property type="entry name" value="RRM"/>
    <property type="match status" value="1"/>
</dbReference>
<dbReference type="SUPFAM" id="SSF54928">
    <property type="entry name" value="RNA-binding domain, RBD"/>
    <property type="match status" value="1"/>
</dbReference>
<dbReference type="PROSITE" id="PS50102">
    <property type="entry name" value="RRM"/>
    <property type="match status" value="1"/>
</dbReference>
<proteinExistence type="predicted"/>
<gene>
    <name type="ORF">EEED8.12</name>
</gene>
<accession>Q09301</accession>
<feature type="chain" id="PRO_0000082016" description="Putative RNA-binding protein EEED8.12">
    <location>
        <begin position="1"/>
        <end position="197"/>
    </location>
</feature>
<feature type="domain" description="RRM" evidence="1">
    <location>
        <begin position="61"/>
        <end position="138"/>
    </location>
</feature>
<feature type="region of interest" description="Disordered" evidence="2">
    <location>
        <begin position="142"/>
        <end position="166"/>
    </location>
</feature>
<protein>
    <recommendedName>
        <fullName>Putative RNA-binding protein EEED8.12</fullName>
    </recommendedName>
</protein>